<name>LSPA_ECO55</name>
<sequence length="164" mass="18128">MSQSICSTGLRWLWLVVVVLIIDLGSKYLILQNFALGDTVPLFPSLNLHYARNYGAAFSFLADSGGWQRWFFAGIAIGISVILAVMMYRSKATQKLNNIAYALIIGGALGNLFDRLWHGFVVDMIDFYVGDWHFATFNLADTAICVGAALIVLEGFLPSKAKKQ</sequence>
<evidence type="ECO:0000255" key="1">
    <source>
        <dbReference type="HAMAP-Rule" id="MF_00161"/>
    </source>
</evidence>
<keyword id="KW-0064">Aspartyl protease</keyword>
<keyword id="KW-0997">Cell inner membrane</keyword>
<keyword id="KW-1003">Cell membrane</keyword>
<keyword id="KW-0378">Hydrolase</keyword>
<keyword id="KW-0472">Membrane</keyword>
<keyword id="KW-0645">Protease</keyword>
<keyword id="KW-1185">Reference proteome</keyword>
<keyword id="KW-0812">Transmembrane</keyword>
<keyword id="KW-1133">Transmembrane helix</keyword>
<protein>
    <recommendedName>
        <fullName evidence="1">Lipoprotein signal peptidase</fullName>
        <ecNumber evidence="1">3.4.23.36</ecNumber>
    </recommendedName>
    <alternativeName>
        <fullName evidence="1">Prolipoprotein signal peptidase</fullName>
    </alternativeName>
    <alternativeName>
        <fullName evidence="1">Signal peptidase II</fullName>
        <shortName evidence="1">SPase II</shortName>
    </alternativeName>
</protein>
<reference key="1">
    <citation type="journal article" date="2009" name="PLoS Genet.">
        <title>Organised genome dynamics in the Escherichia coli species results in highly diverse adaptive paths.</title>
        <authorList>
            <person name="Touchon M."/>
            <person name="Hoede C."/>
            <person name="Tenaillon O."/>
            <person name="Barbe V."/>
            <person name="Baeriswyl S."/>
            <person name="Bidet P."/>
            <person name="Bingen E."/>
            <person name="Bonacorsi S."/>
            <person name="Bouchier C."/>
            <person name="Bouvet O."/>
            <person name="Calteau A."/>
            <person name="Chiapello H."/>
            <person name="Clermont O."/>
            <person name="Cruveiller S."/>
            <person name="Danchin A."/>
            <person name="Diard M."/>
            <person name="Dossat C."/>
            <person name="Karoui M.E."/>
            <person name="Frapy E."/>
            <person name="Garry L."/>
            <person name="Ghigo J.M."/>
            <person name="Gilles A.M."/>
            <person name="Johnson J."/>
            <person name="Le Bouguenec C."/>
            <person name="Lescat M."/>
            <person name="Mangenot S."/>
            <person name="Martinez-Jehanne V."/>
            <person name="Matic I."/>
            <person name="Nassif X."/>
            <person name="Oztas S."/>
            <person name="Petit M.A."/>
            <person name="Pichon C."/>
            <person name="Rouy Z."/>
            <person name="Ruf C.S."/>
            <person name="Schneider D."/>
            <person name="Tourret J."/>
            <person name="Vacherie B."/>
            <person name="Vallenet D."/>
            <person name="Medigue C."/>
            <person name="Rocha E.P.C."/>
            <person name="Denamur E."/>
        </authorList>
    </citation>
    <scope>NUCLEOTIDE SEQUENCE [LARGE SCALE GENOMIC DNA]</scope>
    <source>
        <strain>55989 / EAEC</strain>
    </source>
</reference>
<proteinExistence type="inferred from homology"/>
<dbReference type="EC" id="3.4.23.36" evidence="1"/>
<dbReference type="EMBL" id="CU928145">
    <property type="protein sequence ID" value="CAU95913.1"/>
    <property type="molecule type" value="Genomic_DNA"/>
</dbReference>
<dbReference type="RefSeq" id="WP_000083369.1">
    <property type="nucleotide sequence ID" value="NC_011748.1"/>
</dbReference>
<dbReference type="SMR" id="B7L4E9"/>
<dbReference type="MEROPS" id="A08.001"/>
<dbReference type="GeneID" id="75169926"/>
<dbReference type="KEGG" id="eck:EC55989_0026"/>
<dbReference type="HOGENOM" id="CLU_083252_4_0_6"/>
<dbReference type="UniPathway" id="UPA00665"/>
<dbReference type="Proteomes" id="UP000000746">
    <property type="component" value="Chromosome"/>
</dbReference>
<dbReference type="GO" id="GO:0005886">
    <property type="term" value="C:plasma membrane"/>
    <property type="evidence" value="ECO:0007669"/>
    <property type="project" value="UniProtKB-SubCell"/>
</dbReference>
<dbReference type="GO" id="GO:0004190">
    <property type="term" value="F:aspartic-type endopeptidase activity"/>
    <property type="evidence" value="ECO:0007669"/>
    <property type="project" value="UniProtKB-UniRule"/>
</dbReference>
<dbReference type="GO" id="GO:0006508">
    <property type="term" value="P:proteolysis"/>
    <property type="evidence" value="ECO:0007669"/>
    <property type="project" value="UniProtKB-KW"/>
</dbReference>
<dbReference type="HAMAP" id="MF_00161">
    <property type="entry name" value="LspA"/>
    <property type="match status" value="1"/>
</dbReference>
<dbReference type="InterPro" id="IPR001872">
    <property type="entry name" value="Peptidase_A8"/>
</dbReference>
<dbReference type="NCBIfam" id="TIGR00077">
    <property type="entry name" value="lspA"/>
    <property type="match status" value="1"/>
</dbReference>
<dbReference type="PANTHER" id="PTHR33695">
    <property type="entry name" value="LIPOPROTEIN SIGNAL PEPTIDASE"/>
    <property type="match status" value="1"/>
</dbReference>
<dbReference type="PANTHER" id="PTHR33695:SF1">
    <property type="entry name" value="LIPOPROTEIN SIGNAL PEPTIDASE"/>
    <property type="match status" value="1"/>
</dbReference>
<dbReference type="Pfam" id="PF01252">
    <property type="entry name" value="Peptidase_A8"/>
    <property type="match status" value="1"/>
</dbReference>
<dbReference type="PRINTS" id="PR00781">
    <property type="entry name" value="LIPOSIGPTASE"/>
</dbReference>
<dbReference type="PROSITE" id="PS00855">
    <property type="entry name" value="SPASE_II"/>
    <property type="match status" value="1"/>
</dbReference>
<comment type="function">
    <text evidence="1">This protein specifically catalyzes the removal of signal peptides from prolipoproteins.</text>
</comment>
<comment type="catalytic activity">
    <reaction evidence="1">
        <text>Release of signal peptides from bacterial membrane prolipoproteins. Hydrolyzes -Xaa-Yaa-Zaa-|-(S,diacylglyceryl)Cys-, in which Xaa is hydrophobic (preferably Leu), and Yaa (Ala or Ser) and Zaa (Gly or Ala) have small, neutral side chains.</text>
        <dbReference type="EC" id="3.4.23.36"/>
    </reaction>
</comment>
<comment type="pathway">
    <text evidence="1">Protein modification; lipoprotein biosynthesis (signal peptide cleavage).</text>
</comment>
<comment type="subcellular location">
    <subcellularLocation>
        <location evidence="1">Cell inner membrane</location>
        <topology evidence="1">Multi-pass membrane protein</topology>
    </subcellularLocation>
</comment>
<comment type="similarity">
    <text evidence="1">Belongs to the peptidase A8 family.</text>
</comment>
<accession>B7L4E9</accession>
<gene>
    <name evidence="1" type="primary">lspA</name>
    <name type="ordered locus">EC55989_0026</name>
</gene>
<feature type="chain" id="PRO_1000123496" description="Lipoprotein signal peptidase">
    <location>
        <begin position="1"/>
        <end position="164"/>
    </location>
</feature>
<feature type="transmembrane region" description="Helical" evidence="1">
    <location>
        <begin position="12"/>
        <end position="32"/>
    </location>
</feature>
<feature type="transmembrane region" description="Helical" evidence="1">
    <location>
        <begin position="70"/>
        <end position="90"/>
    </location>
</feature>
<feature type="transmembrane region" description="Helical" evidence="1">
    <location>
        <begin position="102"/>
        <end position="122"/>
    </location>
</feature>
<feature type="transmembrane region" description="Helical" evidence="1">
    <location>
        <begin position="137"/>
        <end position="157"/>
    </location>
</feature>
<feature type="active site" evidence="1">
    <location>
        <position position="123"/>
    </location>
</feature>
<feature type="active site" evidence="1">
    <location>
        <position position="141"/>
    </location>
</feature>
<organism>
    <name type="scientific">Escherichia coli (strain 55989 / EAEC)</name>
    <dbReference type="NCBI Taxonomy" id="585055"/>
    <lineage>
        <taxon>Bacteria</taxon>
        <taxon>Pseudomonadati</taxon>
        <taxon>Pseudomonadota</taxon>
        <taxon>Gammaproteobacteria</taxon>
        <taxon>Enterobacterales</taxon>
        <taxon>Enterobacteriaceae</taxon>
        <taxon>Escherichia</taxon>
    </lineage>
</organism>